<keyword id="KW-0963">Cytoplasm</keyword>
<keyword id="KW-0206">Cytoskeleton</keyword>
<keyword id="KW-0342">GTP-binding</keyword>
<keyword id="KW-0460">Magnesium</keyword>
<keyword id="KW-0479">Metal-binding</keyword>
<keyword id="KW-0493">Microtubule</keyword>
<keyword id="KW-0547">Nucleotide-binding</keyword>
<gene>
    <name type="primary">TUB2</name>
</gene>
<evidence type="ECO:0000250" key="1">
    <source>
        <dbReference type="UniProtKB" id="P68363"/>
    </source>
</evidence>
<evidence type="ECO:0000250" key="2">
    <source>
        <dbReference type="UniProtKB" id="Q13509"/>
    </source>
</evidence>
<evidence type="ECO:0000256" key="3">
    <source>
        <dbReference type="SAM" id="MobiDB-lite"/>
    </source>
</evidence>
<evidence type="ECO:0000305" key="4"/>
<name>TBB_BLUHO</name>
<comment type="function">
    <text>Tubulin is the major constituent of microtubules, a cylinder consisting of laterally associated linear protofilaments composed of alpha- and beta-tubulin heterodimers. Microtubules grow by the addition of GTP-tubulin dimers to the microtubule end, where a stabilizing cap forms. Below the cap, tubulin dimers are in GDP-bound state, owing to GTPase activity of alpha-tubulin.</text>
</comment>
<comment type="cofactor">
    <cofactor evidence="1">
        <name>Mg(2+)</name>
        <dbReference type="ChEBI" id="CHEBI:18420"/>
    </cofactor>
</comment>
<comment type="subunit">
    <text>Dimer of alpha and beta chains. A typical microtubule is a hollow water-filled tube with an outer diameter of 25 nm and an inner diameter of 15 nM. Alpha-beta heterodimers associate head-to-tail to form protofilaments running lengthwise along the microtubule wall with the beta-tubulin subunit facing the microtubule plus end conferring a structural polarity. Microtubules usually have 13 protofilaments but different protofilament numbers can be found in some organisms and specialized cells.</text>
</comment>
<comment type="subcellular location">
    <subcellularLocation>
        <location>Cytoplasm</location>
        <location>Cytoskeleton</location>
    </subcellularLocation>
</comment>
<comment type="similarity">
    <text evidence="4">Belongs to the tubulin family.</text>
</comment>
<protein>
    <recommendedName>
        <fullName>Tubulin beta chain</fullName>
    </recommendedName>
    <alternativeName>
        <fullName>Beta-tubulin</fullName>
    </alternativeName>
</protein>
<sequence length="446" mass="49724">MREIVHLQTGQCGNQIGAAFWQTISGEHGLDGSGVYNGTSDLQLERMNVYFNEASGNKYVPRAVLVDLEPGTMDAVRAGPFGQLFRPDNFVFGQSGAGNNWAKGHYTEGAELVDQVLDVVRREAEGCDCLQGFQITHSLGGGTGAGMGTLLISKIREEFPDRMMATFSVVPSPKVSDTVVEPYNATLSVHQLVENSDETFCIDNEALYDICMRTLKLSNPSYGDLNHLVSAVMSGVTTCLRFPGQLNSDLRKLAVNMVPFPRLHFFMVGFAPLTSRGAHSFRAVTVPELTQQMFDPKNMMAASDFRNGRYLTCSAIFRGKVSMKEVEDQMRNVQQKNVSYFVEWIPNNVQTALCSIPPRGLKMSSTFVGNSTSIQELFKRVGDQFTAMFRRKAFLHWYTGEGMDEMEFTEAESNMNDLVSEYQQYQEASISEGEEEYPEEVSNEEE</sequence>
<dbReference type="EMBL" id="X51326">
    <property type="protein sequence ID" value="CAA35709.1"/>
    <property type="molecule type" value="Genomic_DNA"/>
</dbReference>
<dbReference type="PIR" id="S08403">
    <property type="entry name" value="S08403"/>
</dbReference>
<dbReference type="SMR" id="P16040"/>
<dbReference type="EnsemblFungi" id="BLGH_02993-mRNA-1">
    <property type="protein sequence ID" value="BLGH_02993-mRNA-1"/>
    <property type="gene ID" value="BLGH_02993"/>
</dbReference>
<dbReference type="VEuPathDB" id="FungiDB:BLGHR1_15633"/>
<dbReference type="GO" id="GO:0005737">
    <property type="term" value="C:cytoplasm"/>
    <property type="evidence" value="ECO:0007669"/>
    <property type="project" value="UniProtKB-KW"/>
</dbReference>
<dbReference type="GO" id="GO:0005874">
    <property type="term" value="C:microtubule"/>
    <property type="evidence" value="ECO:0007669"/>
    <property type="project" value="UniProtKB-KW"/>
</dbReference>
<dbReference type="GO" id="GO:0005525">
    <property type="term" value="F:GTP binding"/>
    <property type="evidence" value="ECO:0007669"/>
    <property type="project" value="UniProtKB-KW"/>
</dbReference>
<dbReference type="GO" id="GO:0003924">
    <property type="term" value="F:GTPase activity"/>
    <property type="evidence" value="ECO:0007669"/>
    <property type="project" value="InterPro"/>
</dbReference>
<dbReference type="GO" id="GO:0046872">
    <property type="term" value="F:metal ion binding"/>
    <property type="evidence" value="ECO:0007669"/>
    <property type="project" value="UniProtKB-KW"/>
</dbReference>
<dbReference type="GO" id="GO:0005200">
    <property type="term" value="F:structural constituent of cytoskeleton"/>
    <property type="evidence" value="ECO:0007669"/>
    <property type="project" value="InterPro"/>
</dbReference>
<dbReference type="GO" id="GO:0007017">
    <property type="term" value="P:microtubule-based process"/>
    <property type="evidence" value="ECO:0007669"/>
    <property type="project" value="InterPro"/>
</dbReference>
<dbReference type="CDD" id="cd02187">
    <property type="entry name" value="beta_tubulin"/>
    <property type="match status" value="1"/>
</dbReference>
<dbReference type="FunFam" id="1.10.287.600:FF:000003">
    <property type="entry name" value="Tubulin beta chain"/>
    <property type="match status" value="1"/>
</dbReference>
<dbReference type="FunFam" id="3.30.1330.20:FF:000002">
    <property type="entry name" value="Tubulin beta chain"/>
    <property type="match status" value="1"/>
</dbReference>
<dbReference type="FunFam" id="3.40.50.1440:FF:000009">
    <property type="entry name" value="Tubulin beta chain"/>
    <property type="match status" value="1"/>
</dbReference>
<dbReference type="Gene3D" id="1.10.287.600">
    <property type="entry name" value="Helix hairpin bin"/>
    <property type="match status" value="1"/>
</dbReference>
<dbReference type="Gene3D" id="3.30.1330.20">
    <property type="entry name" value="Tubulin/FtsZ, C-terminal domain"/>
    <property type="match status" value="1"/>
</dbReference>
<dbReference type="Gene3D" id="3.40.50.1440">
    <property type="entry name" value="Tubulin/FtsZ, GTPase domain"/>
    <property type="match status" value="1"/>
</dbReference>
<dbReference type="InterPro" id="IPR013838">
    <property type="entry name" value="Beta-tubulin_BS"/>
</dbReference>
<dbReference type="InterPro" id="IPR002453">
    <property type="entry name" value="Beta_tubulin"/>
</dbReference>
<dbReference type="InterPro" id="IPR008280">
    <property type="entry name" value="Tub_FtsZ_C"/>
</dbReference>
<dbReference type="InterPro" id="IPR000217">
    <property type="entry name" value="Tubulin"/>
</dbReference>
<dbReference type="InterPro" id="IPR037103">
    <property type="entry name" value="Tubulin/FtsZ-like_C"/>
</dbReference>
<dbReference type="InterPro" id="IPR018316">
    <property type="entry name" value="Tubulin/FtsZ_2-layer-sand-dom"/>
</dbReference>
<dbReference type="InterPro" id="IPR036525">
    <property type="entry name" value="Tubulin/FtsZ_GTPase_sf"/>
</dbReference>
<dbReference type="InterPro" id="IPR023123">
    <property type="entry name" value="Tubulin_C"/>
</dbReference>
<dbReference type="InterPro" id="IPR017975">
    <property type="entry name" value="Tubulin_CS"/>
</dbReference>
<dbReference type="InterPro" id="IPR003008">
    <property type="entry name" value="Tubulin_FtsZ_GTPase"/>
</dbReference>
<dbReference type="PANTHER" id="PTHR11588">
    <property type="entry name" value="TUBULIN"/>
    <property type="match status" value="1"/>
</dbReference>
<dbReference type="Pfam" id="PF00091">
    <property type="entry name" value="Tubulin"/>
    <property type="match status" value="1"/>
</dbReference>
<dbReference type="Pfam" id="PF03953">
    <property type="entry name" value="Tubulin_C"/>
    <property type="match status" value="1"/>
</dbReference>
<dbReference type="PRINTS" id="PR01163">
    <property type="entry name" value="BETATUBULIN"/>
</dbReference>
<dbReference type="PRINTS" id="PR01161">
    <property type="entry name" value="TUBULIN"/>
</dbReference>
<dbReference type="SMART" id="SM00864">
    <property type="entry name" value="Tubulin"/>
    <property type="match status" value="1"/>
</dbReference>
<dbReference type="SMART" id="SM00865">
    <property type="entry name" value="Tubulin_C"/>
    <property type="match status" value="1"/>
</dbReference>
<dbReference type="SUPFAM" id="SSF55307">
    <property type="entry name" value="Tubulin C-terminal domain-like"/>
    <property type="match status" value="1"/>
</dbReference>
<dbReference type="SUPFAM" id="SSF52490">
    <property type="entry name" value="Tubulin nucleotide-binding domain-like"/>
    <property type="match status" value="1"/>
</dbReference>
<dbReference type="PROSITE" id="PS00227">
    <property type="entry name" value="TUBULIN"/>
    <property type="match status" value="1"/>
</dbReference>
<dbReference type="PROSITE" id="PS00228">
    <property type="entry name" value="TUBULIN_B_AUTOREG"/>
    <property type="match status" value="1"/>
</dbReference>
<organism>
    <name type="scientific">Blumeria hordei</name>
    <name type="common">Barley powdery mildew</name>
    <name type="synonym">Blumeria graminis f. sp. hordei</name>
    <dbReference type="NCBI Taxonomy" id="2867405"/>
    <lineage>
        <taxon>Eukaryota</taxon>
        <taxon>Fungi</taxon>
        <taxon>Dikarya</taxon>
        <taxon>Ascomycota</taxon>
        <taxon>Pezizomycotina</taxon>
        <taxon>Leotiomycetes</taxon>
        <taxon>Erysiphales</taxon>
        <taxon>Erysiphaceae</taxon>
        <taxon>Blumeria</taxon>
    </lineage>
</organism>
<reference key="1">
    <citation type="journal article" date="1990" name="Nucleic Acids Res.">
        <title>Sequence of the Erysiphe graminis f. sp. hordei gene encoding beta-tubulin.</title>
        <authorList>
            <person name="Sherwood J.E."/>
            <person name="Somerville S.C."/>
        </authorList>
    </citation>
    <scope>NUCLEOTIDE SEQUENCE [GENOMIC DNA]</scope>
    <source>
        <strain>CR3</strain>
        <tissue>Conidium</tissue>
    </source>
</reference>
<proteinExistence type="inferred from homology"/>
<accession>P16040</accession>
<feature type="chain" id="PRO_0000048412" description="Tubulin beta chain">
    <location>
        <begin position="1"/>
        <end position="446"/>
    </location>
</feature>
<feature type="region of interest" description="Disordered" evidence="3">
    <location>
        <begin position="425"/>
        <end position="446"/>
    </location>
</feature>
<feature type="compositionally biased region" description="Acidic residues" evidence="3">
    <location>
        <begin position="432"/>
        <end position="446"/>
    </location>
</feature>
<feature type="binding site" evidence="2">
    <location>
        <position position="11"/>
    </location>
    <ligand>
        <name>GTP</name>
        <dbReference type="ChEBI" id="CHEBI:37565"/>
    </ligand>
</feature>
<feature type="binding site" evidence="1">
    <location>
        <position position="69"/>
    </location>
    <ligand>
        <name>GTP</name>
        <dbReference type="ChEBI" id="CHEBI:37565"/>
    </ligand>
</feature>
<feature type="binding site" evidence="1">
    <location>
        <position position="69"/>
    </location>
    <ligand>
        <name>Mg(2+)</name>
        <dbReference type="ChEBI" id="CHEBI:18420"/>
    </ligand>
</feature>
<feature type="binding site" evidence="2">
    <location>
        <position position="138"/>
    </location>
    <ligand>
        <name>GTP</name>
        <dbReference type="ChEBI" id="CHEBI:37565"/>
    </ligand>
</feature>
<feature type="binding site" evidence="2">
    <location>
        <position position="142"/>
    </location>
    <ligand>
        <name>GTP</name>
        <dbReference type="ChEBI" id="CHEBI:37565"/>
    </ligand>
</feature>
<feature type="binding site" evidence="2">
    <location>
        <position position="143"/>
    </location>
    <ligand>
        <name>GTP</name>
        <dbReference type="ChEBI" id="CHEBI:37565"/>
    </ligand>
</feature>
<feature type="binding site" evidence="2">
    <location>
        <position position="144"/>
    </location>
    <ligand>
        <name>GTP</name>
        <dbReference type="ChEBI" id="CHEBI:37565"/>
    </ligand>
</feature>
<feature type="binding site" evidence="2">
    <location>
        <position position="204"/>
    </location>
    <ligand>
        <name>GTP</name>
        <dbReference type="ChEBI" id="CHEBI:37565"/>
    </ligand>
</feature>
<feature type="binding site" evidence="2">
    <location>
        <position position="226"/>
    </location>
    <ligand>
        <name>GTP</name>
        <dbReference type="ChEBI" id="CHEBI:37565"/>
    </ligand>
</feature>